<accession>Q47C04</accession>
<comment type="function">
    <text evidence="1">Catalyzes the decarboxylative condensation of pimeloyl-[acyl-carrier protein] and L-alanine to produce 8-amino-7-oxononanoate (AON), [acyl-carrier protein], and carbon dioxide.</text>
</comment>
<comment type="catalytic activity">
    <reaction evidence="1">
        <text>6-carboxyhexanoyl-[ACP] + L-alanine + H(+) = (8S)-8-amino-7-oxononanoate + holo-[ACP] + CO2</text>
        <dbReference type="Rhea" id="RHEA:42288"/>
        <dbReference type="Rhea" id="RHEA-COMP:9685"/>
        <dbReference type="Rhea" id="RHEA-COMP:9955"/>
        <dbReference type="ChEBI" id="CHEBI:15378"/>
        <dbReference type="ChEBI" id="CHEBI:16526"/>
        <dbReference type="ChEBI" id="CHEBI:57972"/>
        <dbReference type="ChEBI" id="CHEBI:64479"/>
        <dbReference type="ChEBI" id="CHEBI:78846"/>
        <dbReference type="ChEBI" id="CHEBI:149468"/>
        <dbReference type="EC" id="2.3.1.47"/>
    </reaction>
</comment>
<comment type="cofactor">
    <cofactor evidence="1">
        <name>pyridoxal 5'-phosphate</name>
        <dbReference type="ChEBI" id="CHEBI:597326"/>
    </cofactor>
</comment>
<comment type="pathway">
    <text evidence="1">Cofactor biosynthesis; biotin biosynthesis.</text>
</comment>
<comment type="subunit">
    <text evidence="1">Homodimer.</text>
</comment>
<comment type="similarity">
    <text evidence="1">Belongs to the class-II pyridoxal-phosphate-dependent aminotransferase family. BioF subfamily.</text>
</comment>
<feature type="chain" id="PRO_0000380962" description="8-amino-7-oxononanoate synthase">
    <location>
        <begin position="1"/>
        <end position="387"/>
    </location>
</feature>
<feature type="binding site" evidence="1">
    <location>
        <position position="20"/>
    </location>
    <ligand>
        <name>substrate</name>
    </ligand>
</feature>
<feature type="binding site" evidence="1">
    <location>
        <begin position="107"/>
        <end position="108"/>
    </location>
    <ligand>
        <name>pyridoxal 5'-phosphate</name>
        <dbReference type="ChEBI" id="CHEBI:597326"/>
    </ligand>
</feature>
<feature type="binding site" evidence="1">
    <location>
        <position position="132"/>
    </location>
    <ligand>
        <name>substrate</name>
    </ligand>
</feature>
<feature type="binding site" evidence="1">
    <location>
        <position position="181"/>
    </location>
    <ligand>
        <name>pyridoxal 5'-phosphate</name>
        <dbReference type="ChEBI" id="CHEBI:597326"/>
    </ligand>
</feature>
<feature type="binding site" evidence="1">
    <location>
        <position position="209"/>
    </location>
    <ligand>
        <name>pyridoxal 5'-phosphate</name>
        <dbReference type="ChEBI" id="CHEBI:597326"/>
    </ligand>
</feature>
<feature type="binding site" evidence="1">
    <location>
        <position position="238"/>
    </location>
    <ligand>
        <name>pyridoxal 5'-phosphate</name>
        <dbReference type="ChEBI" id="CHEBI:597326"/>
    </ligand>
</feature>
<feature type="binding site" evidence="1">
    <location>
        <position position="355"/>
    </location>
    <ligand>
        <name>substrate</name>
    </ligand>
</feature>
<feature type="modified residue" description="N6-(pyridoxal phosphate)lysine" evidence="1">
    <location>
        <position position="241"/>
    </location>
</feature>
<proteinExistence type="inferred from homology"/>
<organism>
    <name type="scientific">Dechloromonas aromatica (strain RCB)</name>
    <dbReference type="NCBI Taxonomy" id="159087"/>
    <lineage>
        <taxon>Bacteria</taxon>
        <taxon>Pseudomonadati</taxon>
        <taxon>Pseudomonadota</taxon>
        <taxon>Betaproteobacteria</taxon>
        <taxon>Rhodocyclales</taxon>
        <taxon>Azonexaceae</taxon>
        <taxon>Dechloromonas</taxon>
    </lineage>
</organism>
<dbReference type="EC" id="2.3.1.47" evidence="1"/>
<dbReference type="EMBL" id="CP000089">
    <property type="protein sequence ID" value="AAZ47627.1"/>
    <property type="molecule type" value="Genomic_DNA"/>
</dbReference>
<dbReference type="SMR" id="Q47C04"/>
<dbReference type="STRING" id="159087.Daro_2897"/>
<dbReference type="KEGG" id="dar:Daro_2897"/>
<dbReference type="eggNOG" id="COG0156">
    <property type="taxonomic scope" value="Bacteria"/>
</dbReference>
<dbReference type="HOGENOM" id="CLU_015846_11_2_4"/>
<dbReference type="OrthoDB" id="9807157at2"/>
<dbReference type="UniPathway" id="UPA00078"/>
<dbReference type="GO" id="GO:0008710">
    <property type="term" value="F:8-amino-7-oxononanoate synthase activity"/>
    <property type="evidence" value="ECO:0007669"/>
    <property type="project" value="UniProtKB-UniRule"/>
</dbReference>
<dbReference type="GO" id="GO:0030170">
    <property type="term" value="F:pyridoxal phosphate binding"/>
    <property type="evidence" value="ECO:0007669"/>
    <property type="project" value="UniProtKB-UniRule"/>
</dbReference>
<dbReference type="GO" id="GO:0009102">
    <property type="term" value="P:biotin biosynthetic process"/>
    <property type="evidence" value="ECO:0007669"/>
    <property type="project" value="UniProtKB-UniRule"/>
</dbReference>
<dbReference type="CDD" id="cd06454">
    <property type="entry name" value="KBL_like"/>
    <property type="match status" value="1"/>
</dbReference>
<dbReference type="Gene3D" id="3.90.1150.10">
    <property type="entry name" value="Aspartate Aminotransferase, domain 1"/>
    <property type="match status" value="1"/>
</dbReference>
<dbReference type="Gene3D" id="3.40.640.10">
    <property type="entry name" value="Type I PLP-dependent aspartate aminotransferase-like (Major domain)"/>
    <property type="match status" value="1"/>
</dbReference>
<dbReference type="HAMAP" id="MF_01693">
    <property type="entry name" value="BioF_aminotrans_2"/>
    <property type="match status" value="1"/>
</dbReference>
<dbReference type="InterPro" id="IPR004839">
    <property type="entry name" value="Aminotransferase_I/II_large"/>
</dbReference>
<dbReference type="InterPro" id="IPR050087">
    <property type="entry name" value="AON_synthase_class-II"/>
</dbReference>
<dbReference type="InterPro" id="IPR004723">
    <property type="entry name" value="AONS_Archaea/Proteobacteria"/>
</dbReference>
<dbReference type="InterPro" id="IPR022834">
    <property type="entry name" value="AONS_Proteobacteria"/>
</dbReference>
<dbReference type="InterPro" id="IPR015424">
    <property type="entry name" value="PyrdxlP-dep_Trfase"/>
</dbReference>
<dbReference type="InterPro" id="IPR015421">
    <property type="entry name" value="PyrdxlP-dep_Trfase_major"/>
</dbReference>
<dbReference type="InterPro" id="IPR015422">
    <property type="entry name" value="PyrdxlP-dep_Trfase_small"/>
</dbReference>
<dbReference type="NCBIfam" id="TIGR00858">
    <property type="entry name" value="bioF"/>
    <property type="match status" value="1"/>
</dbReference>
<dbReference type="PANTHER" id="PTHR13693:SF100">
    <property type="entry name" value="8-AMINO-7-OXONONANOATE SYNTHASE"/>
    <property type="match status" value="1"/>
</dbReference>
<dbReference type="PANTHER" id="PTHR13693">
    <property type="entry name" value="CLASS II AMINOTRANSFERASE/8-AMINO-7-OXONONANOATE SYNTHASE"/>
    <property type="match status" value="1"/>
</dbReference>
<dbReference type="Pfam" id="PF00155">
    <property type="entry name" value="Aminotran_1_2"/>
    <property type="match status" value="1"/>
</dbReference>
<dbReference type="SUPFAM" id="SSF53383">
    <property type="entry name" value="PLP-dependent transferases"/>
    <property type="match status" value="1"/>
</dbReference>
<reference key="1">
    <citation type="journal article" date="2009" name="BMC Genomics">
        <title>Metabolic analysis of the soil microbe Dechloromonas aromatica str. RCB: indications of a surprisingly complex life-style and cryptic anaerobic pathways for aromatic degradation.</title>
        <authorList>
            <person name="Salinero K.K."/>
            <person name="Keller K."/>
            <person name="Feil W.S."/>
            <person name="Feil H."/>
            <person name="Trong S."/>
            <person name="Di Bartolo G."/>
            <person name="Lapidus A."/>
        </authorList>
    </citation>
    <scope>NUCLEOTIDE SEQUENCE [LARGE SCALE GENOMIC DNA]</scope>
    <source>
        <strain>RCB</strain>
    </source>
</reference>
<sequence>MIEDHLNTELAEIASAGLTRRRRVLETPCGRMATVDGTNLLNFASNDYLGLAGNADIARVLADGALQWGAGSGASHLVSGHLGPHELLEKEIAEFTGFPRTLTFSTGYLANLAVTPTLAGRGDAVFADKLNHASLIDAMQLAKANGAEVQRYPHNDVAALEKMLAASTAAHKIIVTDAVFSMDGDLAPLPLIFALAERYDAWLVIDDAHGFGVLGPHGEGSLGHFNLPASPRILLMGTLGKAAGVGGAFVAGSETAIEYLLQKGRSYIFTTAQPPAIACALAKSLQLIRDGDALRANLMDRIGQLRDGLAGLPMKLLPSPTAIQPLIVGDNDAAVALSKALWERGLWVPAIRPPTVPKGTARLRISVSAAHTEADIAQLIAALKELA</sequence>
<protein>
    <recommendedName>
        <fullName evidence="1">8-amino-7-oxononanoate synthase</fullName>
        <shortName evidence="1">AONS</shortName>
        <ecNumber evidence="1">2.3.1.47</ecNumber>
    </recommendedName>
    <alternativeName>
        <fullName evidence="1">7-keto-8-amino-pelargonic acid synthase</fullName>
        <shortName evidence="1">7-KAP synthase</shortName>
        <shortName evidence="1">KAPA synthase</shortName>
    </alternativeName>
    <alternativeName>
        <fullName evidence="1">8-amino-7-ketopelargonate synthase</fullName>
    </alternativeName>
</protein>
<name>BIOF_DECAR</name>
<evidence type="ECO:0000255" key="1">
    <source>
        <dbReference type="HAMAP-Rule" id="MF_01693"/>
    </source>
</evidence>
<gene>
    <name evidence="1" type="primary">bioF</name>
    <name type="ordered locus">Daro_2897</name>
</gene>
<keyword id="KW-0093">Biotin biosynthesis</keyword>
<keyword id="KW-0663">Pyridoxal phosphate</keyword>
<keyword id="KW-0808">Transferase</keyword>